<protein>
    <recommendedName>
        <fullName evidence="5">Esterase/beta-lactamase LipL</fullName>
        <ecNumber evidence="2 3">3.1.1.-</ecNumber>
        <ecNumber evidence="3">3.5.2.6</ecNumber>
    </recommendedName>
</protein>
<sequence length="429" mass="45816">MMVDTGVDHRAVSSHDGPDAGRRVFGAADPRFACVVRAFASMFPGRRFGGGALAVYLDGQPVVDVWKGWADRAGWVPWSADSAPMVFSATKGMTATVIHRLADRGLIDYEAPVAEYWPAFGANGKATLTVRDVMRHQAGLSGLRGATQQDLLDHVVMEERLAAAVPGRLLGKSAYHALTFGWLMSGLARAVTGKDMRLLFREELAEPLDTDGLHLGRPPADAPTRVAEIIMPQDIAANAVLTCAMRRLAHRFSGGFRSMYFPGAIAAVQGEAPLLDAEIPAANGVATARALARMYGAIANGGEIDGIRFLSRELVTGLTRNRRQVLPDRNLLVPLNFHLGYHGMPIGNVMPGFGHVGLGGSIGWTDPETGVAFALVHNRLLSPLVMTDHAGFVGIYHLIRQAAAQARKRGYQPVTPFGAPYSEPGAAAG</sequence>
<gene>
    <name evidence="4" type="primary">lipL</name>
    <name evidence="6" type="ordered locus">Rv1497</name>
</gene>
<dbReference type="EC" id="3.1.1.-" evidence="2 3"/>
<dbReference type="EC" id="3.5.2.6" evidence="3"/>
<dbReference type="EMBL" id="AL123456">
    <property type="protein sequence ID" value="CCP44258.1"/>
    <property type="molecule type" value="Genomic_DNA"/>
</dbReference>
<dbReference type="RefSeq" id="NP_216013.1">
    <property type="nucleotide sequence ID" value="NC_000962.3"/>
</dbReference>
<dbReference type="RefSeq" id="WP_003407599.1">
    <property type="nucleotide sequence ID" value="NZ_NVQJ01000004.1"/>
</dbReference>
<dbReference type="SMR" id="P71778"/>
<dbReference type="FunCoup" id="P71778">
    <property type="interactions" value="1"/>
</dbReference>
<dbReference type="STRING" id="83332.Rv1497"/>
<dbReference type="SwissLipids" id="SLP:000001355"/>
<dbReference type="PaxDb" id="83332-Rv1497"/>
<dbReference type="DNASU" id="886575"/>
<dbReference type="GeneID" id="886575"/>
<dbReference type="KEGG" id="mtu:Rv1497"/>
<dbReference type="KEGG" id="mtv:RVBD_1497"/>
<dbReference type="PATRIC" id="fig|83332.111.peg.1666"/>
<dbReference type="TubercuList" id="Rv1497"/>
<dbReference type="eggNOG" id="COG1680">
    <property type="taxonomic scope" value="Bacteria"/>
</dbReference>
<dbReference type="InParanoid" id="P71778"/>
<dbReference type="OrthoDB" id="9809635at2"/>
<dbReference type="PhylomeDB" id="P71778"/>
<dbReference type="Proteomes" id="UP000001584">
    <property type="component" value="Chromosome"/>
</dbReference>
<dbReference type="GO" id="GO:0005576">
    <property type="term" value="C:extracellular region"/>
    <property type="evidence" value="ECO:0007669"/>
    <property type="project" value="UniProtKB-KW"/>
</dbReference>
<dbReference type="GO" id="GO:0005886">
    <property type="term" value="C:plasma membrane"/>
    <property type="evidence" value="ECO:0007669"/>
    <property type="project" value="UniProtKB-SubCell"/>
</dbReference>
<dbReference type="GO" id="GO:0008126">
    <property type="term" value="F:acetylesterase activity"/>
    <property type="evidence" value="ECO:0007669"/>
    <property type="project" value="RHEA"/>
</dbReference>
<dbReference type="GO" id="GO:0008800">
    <property type="term" value="F:beta-lactamase activity"/>
    <property type="evidence" value="ECO:0007669"/>
    <property type="project" value="UniProtKB-EC"/>
</dbReference>
<dbReference type="GO" id="GO:0004806">
    <property type="term" value="F:triacylglycerol lipase activity"/>
    <property type="evidence" value="ECO:0000314"/>
    <property type="project" value="MTBBASE"/>
</dbReference>
<dbReference type="GO" id="GO:0046503">
    <property type="term" value="P:glycerolipid catabolic process"/>
    <property type="evidence" value="ECO:0000314"/>
    <property type="project" value="MTBBASE"/>
</dbReference>
<dbReference type="Gene3D" id="3.40.710.10">
    <property type="entry name" value="DD-peptidase/beta-lactamase superfamily"/>
    <property type="match status" value="1"/>
</dbReference>
<dbReference type="InterPro" id="IPR001466">
    <property type="entry name" value="Beta-lactam-related"/>
</dbReference>
<dbReference type="InterPro" id="IPR012338">
    <property type="entry name" value="Beta-lactam/transpept-like"/>
</dbReference>
<dbReference type="InterPro" id="IPR052907">
    <property type="entry name" value="Beta-lactamase/esterase"/>
</dbReference>
<dbReference type="PANTHER" id="PTHR43319">
    <property type="entry name" value="BETA-LACTAMASE-RELATED"/>
    <property type="match status" value="1"/>
</dbReference>
<dbReference type="PANTHER" id="PTHR43319:SF3">
    <property type="entry name" value="BETA-LACTAMASE-RELATED DOMAIN-CONTAINING PROTEIN"/>
    <property type="match status" value="1"/>
</dbReference>
<dbReference type="Pfam" id="PF00144">
    <property type="entry name" value="Beta-lactamase"/>
    <property type="match status" value="1"/>
</dbReference>
<dbReference type="SUPFAM" id="SSF56601">
    <property type="entry name" value="beta-lactamase/transpeptidase-like"/>
    <property type="match status" value="1"/>
</dbReference>
<evidence type="ECO:0000250" key="1">
    <source>
        <dbReference type="UniProtKB" id="Q9Y7D1"/>
    </source>
</evidence>
<evidence type="ECO:0000269" key="2">
    <source>
    </source>
</evidence>
<evidence type="ECO:0000269" key="3">
    <source>
    </source>
</evidence>
<evidence type="ECO:0000303" key="4">
    <source>
    </source>
</evidence>
<evidence type="ECO:0000305" key="5"/>
<evidence type="ECO:0000312" key="6">
    <source>
        <dbReference type="EMBL" id="CCP44258.1"/>
    </source>
</evidence>
<feature type="chain" id="PRO_0000448854" description="Esterase/beta-lactamase LipL">
    <location>
        <begin position="1"/>
        <end position="429"/>
    </location>
</feature>
<feature type="active site" description="Acyl-ester intermediate" evidence="1">
    <location>
        <position position="88"/>
    </location>
</feature>
<feature type="mutagenesis site" description="70% loss of esterase activity." evidence="2">
    <original>G</original>
    <variation>A</variation>
    <location>
        <position position="49"/>
    </location>
</feature>
<feature type="mutagenesis site" description="90% loss of esterase activity." evidence="2">
    <original>G</original>
    <variation>A</variation>
    <location>
        <position position="50"/>
    </location>
</feature>
<feature type="mutagenesis site" description="60% loss of esterase activity." evidence="2">
    <original>G</original>
    <variation>A</variation>
    <location>
        <position position="51"/>
    </location>
</feature>
<feature type="mutagenesis site" description="Loss of esterase and beta-lactamase activities." evidence="2 3">
    <original>S</original>
    <variation>A</variation>
    <location>
        <position position="88"/>
    </location>
</feature>
<feature type="mutagenesis site" description="90% loss of esterase activity." evidence="2">
    <original>K</original>
    <variation>A</variation>
    <location>
        <position position="91"/>
    </location>
</feature>
<feature type="mutagenesis site" description="Loss of esterase and beta-lactamase activities." evidence="3">
    <original>Y</original>
    <variation>A</variation>
    <location>
        <position position="175"/>
    </location>
</feature>
<feature type="mutagenesis site" description="80% loss of esterase and beta-lactamase activities." evidence="3">
    <original>H</original>
    <variation>A</variation>
    <location>
        <position position="355"/>
    </location>
</feature>
<feature type="mutagenesis site" description="Almost no change in esterase and beta-lactamase activities." evidence="2 3">
    <original>S</original>
    <variation>A</variation>
    <location>
        <position position="361"/>
    </location>
</feature>
<accession>P71778</accession>
<accession>I6X1F1</accession>
<accession>L0T9T1</accession>
<proteinExistence type="evidence at protein level"/>
<name>LIPL_MYCTU</name>
<organism>
    <name type="scientific">Mycobacterium tuberculosis (strain ATCC 25618 / H37Rv)</name>
    <dbReference type="NCBI Taxonomy" id="83332"/>
    <lineage>
        <taxon>Bacteria</taxon>
        <taxon>Bacillati</taxon>
        <taxon>Actinomycetota</taxon>
        <taxon>Actinomycetes</taxon>
        <taxon>Mycobacteriales</taxon>
        <taxon>Mycobacteriaceae</taxon>
        <taxon>Mycobacterium</taxon>
        <taxon>Mycobacterium tuberculosis complex</taxon>
    </lineage>
</organism>
<keyword id="KW-1003">Cell membrane</keyword>
<keyword id="KW-0134">Cell wall</keyword>
<keyword id="KW-0378">Hydrolase</keyword>
<keyword id="KW-0472">Membrane</keyword>
<keyword id="KW-1185">Reference proteome</keyword>
<keyword id="KW-0964">Secreted</keyword>
<reference key="1">
    <citation type="journal article" date="1998" name="Nature">
        <title>Deciphering the biology of Mycobacterium tuberculosis from the complete genome sequence.</title>
        <authorList>
            <person name="Cole S.T."/>
            <person name="Brosch R."/>
            <person name="Parkhill J."/>
            <person name="Garnier T."/>
            <person name="Churcher C.M."/>
            <person name="Harris D.E."/>
            <person name="Gordon S.V."/>
            <person name="Eiglmeier K."/>
            <person name="Gas S."/>
            <person name="Barry C.E. III"/>
            <person name="Tekaia F."/>
            <person name="Badcock K."/>
            <person name="Basham D."/>
            <person name="Brown D."/>
            <person name="Chillingworth T."/>
            <person name="Connor R."/>
            <person name="Davies R.M."/>
            <person name="Devlin K."/>
            <person name="Feltwell T."/>
            <person name="Gentles S."/>
            <person name="Hamlin N."/>
            <person name="Holroyd S."/>
            <person name="Hornsby T."/>
            <person name="Jagels K."/>
            <person name="Krogh A."/>
            <person name="McLean J."/>
            <person name="Moule S."/>
            <person name="Murphy L.D."/>
            <person name="Oliver S."/>
            <person name="Osborne J."/>
            <person name="Quail M.A."/>
            <person name="Rajandream M.A."/>
            <person name="Rogers J."/>
            <person name="Rutter S."/>
            <person name="Seeger K."/>
            <person name="Skelton S."/>
            <person name="Squares S."/>
            <person name="Squares R."/>
            <person name="Sulston J.E."/>
            <person name="Taylor K."/>
            <person name="Whitehead S."/>
            <person name="Barrell B.G."/>
        </authorList>
    </citation>
    <scope>NUCLEOTIDE SEQUENCE [LARGE SCALE GENOMIC DNA]</scope>
    <source>
        <strain>ATCC 25618 / H37Rv</strain>
    </source>
</reference>
<reference key="2">
    <citation type="journal article" date="2015" name="PLoS ONE">
        <title>Identification and characterization of lipase activity and immunogenicity of LipL from Mycobacterium tuberculosis.</title>
        <authorList>
            <person name="Cao J."/>
            <person name="Dang G."/>
            <person name="Li H."/>
            <person name="Li T."/>
            <person name="Yue Z."/>
            <person name="Li N."/>
            <person name="Liu Y."/>
            <person name="Liu S."/>
            <person name="Chen L."/>
        </authorList>
    </citation>
    <scope>FUNCTION AS AN ESTERASE</scope>
    <scope>CATALYTIC ACTIVITY</scope>
    <scope>SUBCELLULAR LOCATION</scope>
    <scope>IDENTIFICATION BY MASS SPECTROMETRY</scope>
    <scope>MUTAGENESIS OF GLY-49; GLY-50; GLY-51; SER-88; LYS-91 AND SER-361</scope>
</reference>
<reference key="3">
    <citation type="journal article" date="2016" name="Enzyme Microb. Technol.">
        <title>Characterization of a novel esterase Rv1497 of Mycobacterium tuberculosis H37Rv demonstrating beta-lactamase activity.</title>
        <authorList>
            <person name="Singh G."/>
            <person name="Kumar A."/>
            <person name="Arya S."/>
            <person name="Gupta U.D."/>
            <person name="Singh K."/>
            <person name="Kaur J."/>
        </authorList>
    </citation>
    <scope>FUNCTION</scope>
    <scope>CATALYTIC ACTIVITY</scope>
    <scope>ACTIVITY REGULATION</scope>
    <scope>BIOPHYSICOCHEMICAL PROPERTIES</scope>
    <scope>INDUCTION</scope>
    <scope>MUTAGENESIS OF SER-88; TYR-175; HIS-355 AND SER-361</scope>
    <source>
        <strain>H37Rv</strain>
    </source>
</reference>
<comment type="function">
    <text evidence="2 3">Shows both esterase and beta-lactamase activities, with a much higher activity against phenyl esters than against beta-lactams (PubMed:26398213, PubMed:26672466). Shows esterase activity against both long-chain and short-chain p-nitrophenol (pNP) esters, with a preference for shorter chain esters (PubMed:26398213, PubMed:26672466). Hydrolyzes substrates containing beta-lactam ring such as nitrocefin and ampicillin (PubMed:26672466). Functions as an immunogen that activates both humoral and cell-mediated responses (PubMed:26398213).</text>
</comment>
<comment type="catalytic activity">
    <reaction evidence="2 3">
        <text>a fatty acid ester + H2O = an aliphatic alcohol + a fatty acid + H(+)</text>
        <dbReference type="Rhea" id="RHEA:59388"/>
        <dbReference type="ChEBI" id="CHEBI:2571"/>
        <dbReference type="ChEBI" id="CHEBI:15377"/>
        <dbReference type="ChEBI" id="CHEBI:15378"/>
        <dbReference type="ChEBI" id="CHEBI:28868"/>
        <dbReference type="ChEBI" id="CHEBI:35748"/>
    </reaction>
</comment>
<comment type="catalytic activity">
    <reaction evidence="2 3">
        <text>an acetyl ester + H2O = an aliphatic alcohol + acetate + H(+)</text>
        <dbReference type="Rhea" id="RHEA:12957"/>
        <dbReference type="ChEBI" id="CHEBI:2571"/>
        <dbReference type="ChEBI" id="CHEBI:15377"/>
        <dbReference type="ChEBI" id="CHEBI:15378"/>
        <dbReference type="ChEBI" id="CHEBI:30089"/>
        <dbReference type="ChEBI" id="CHEBI:47622"/>
    </reaction>
</comment>
<comment type="catalytic activity">
    <reaction evidence="2 3">
        <text>a butanoate ester + H2O = an aliphatic alcohol + butanoate + H(+)</text>
        <dbReference type="Rhea" id="RHEA:47348"/>
        <dbReference type="ChEBI" id="CHEBI:2571"/>
        <dbReference type="ChEBI" id="CHEBI:15377"/>
        <dbReference type="ChEBI" id="CHEBI:15378"/>
        <dbReference type="ChEBI" id="CHEBI:17968"/>
        <dbReference type="ChEBI" id="CHEBI:50477"/>
    </reaction>
</comment>
<comment type="catalytic activity">
    <reaction evidence="2 3">
        <text>an octanoate ester + H2O = an aliphatic alcohol + octanoate + H(+)</text>
        <dbReference type="Rhea" id="RHEA:47356"/>
        <dbReference type="ChEBI" id="CHEBI:2571"/>
        <dbReference type="ChEBI" id="CHEBI:15377"/>
        <dbReference type="ChEBI" id="CHEBI:15378"/>
        <dbReference type="ChEBI" id="CHEBI:25646"/>
        <dbReference type="ChEBI" id="CHEBI:87657"/>
    </reaction>
</comment>
<comment type="catalytic activity">
    <reaction evidence="3">
        <text>decanoate ester + H2O = decanoate + an aliphatic alcohol + H(+)</text>
        <dbReference type="Rhea" id="RHEA:47360"/>
        <dbReference type="ChEBI" id="CHEBI:2571"/>
        <dbReference type="ChEBI" id="CHEBI:15377"/>
        <dbReference type="ChEBI" id="CHEBI:15378"/>
        <dbReference type="ChEBI" id="CHEBI:27689"/>
        <dbReference type="ChEBI" id="CHEBI:87658"/>
    </reaction>
</comment>
<comment type="catalytic activity">
    <reaction evidence="2 3">
        <text>a dodecanoate ester + H2O = an aliphatic alcohol + dodecanoate + H(+)</text>
        <dbReference type="Rhea" id="RHEA:47364"/>
        <dbReference type="ChEBI" id="CHEBI:2571"/>
        <dbReference type="ChEBI" id="CHEBI:15377"/>
        <dbReference type="ChEBI" id="CHEBI:15378"/>
        <dbReference type="ChEBI" id="CHEBI:18262"/>
        <dbReference type="ChEBI" id="CHEBI:87659"/>
    </reaction>
</comment>
<comment type="catalytic activity">
    <reaction evidence="2 3">
        <text>a tetradecanoate ester + H2O = an aliphatic alcohol + tetradecanoate + H(+)</text>
        <dbReference type="Rhea" id="RHEA:47388"/>
        <dbReference type="ChEBI" id="CHEBI:2571"/>
        <dbReference type="ChEBI" id="CHEBI:15377"/>
        <dbReference type="ChEBI" id="CHEBI:15378"/>
        <dbReference type="ChEBI" id="CHEBI:30807"/>
        <dbReference type="ChEBI" id="CHEBI:87691"/>
    </reaction>
</comment>
<comment type="catalytic activity">
    <reaction evidence="2 3">
        <text>hexadecanoate ester + H2O = an aliphatic alcohol + hexadecanoate + H(+)</text>
        <dbReference type="Rhea" id="RHEA:47392"/>
        <dbReference type="ChEBI" id="CHEBI:2571"/>
        <dbReference type="ChEBI" id="CHEBI:7896"/>
        <dbReference type="ChEBI" id="CHEBI:15377"/>
        <dbReference type="ChEBI" id="CHEBI:15378"/>
        <dbReference type="ChEBI" id="CHEBI:25835"/>
    </reaction>
</comment>
<comment type="catalytic activity">
    <reaction evidence="2 3">
        <text>octadecanoate ester + H2O = an aliphatic alcohol + octadecanoate + H(+)</text>
        <dbReference type="Rhea" id="RHEA:47396"/>
        <dbReference type="ChEBI" id="CHEBI:2571"/>
        <dbReference type="ChEBI" id="CHEBI:15377"/>
        <dbReference type="ChEBI" id="CHEBI:15378"/>
        <dbReference type="ChEBI" id="CHEBI:25629"/>
        <dbReference type="ChEBI" id="CHEBI:75925"/>
    </reaction>
</comment>
<comment type="catalytic activity">
    <reaction evidence="2">
        <text>a hexanoate ester + H2O = an aliphatic alcohol + hexanoate + H(+)</text>
        <dbReference type="Rhea" id="RHEA:47352"/>
        <dbReference type="ChEBI" id="CHEBI:2571"/>
        <dbReference type="ChEBI" id="CHEBI:15377"/>
        <dbReference type="ChEBI" id="CHEBI:15378"/>
        <dbReference type="ChEBI" id="CHEBI:17120"/>
        <dbReference type="ChEBI" id="CHEBI:87656"/>
    </reaction>
</comment>
<comment type="catalytic activity">
    <reaction evidence="3">
        <text>a beta-lactam + H2O = a substituted beta-amino acid</text>
        <dbReference type="Rhea" id="RHEA:20401"/>
        <dbReference type="ChEBI" id="CHEBI:15377"/>
        <dbReference type="ChEBI" id="CHEBI:35627"/>
        <dbReference type="ChEBI" id="CHEBI:140347"/>
        <dbReference type="EC" id="3.5.2.6"/>
    </reaction>
</comment>
<comment type="activity regulation">
    <text evidence="3">Esterase and beta-lactamase activities are inhibited by the active site residue modifiers phenylmethanesulfonylflouride (PMSF) and diethylpyrocarbonate (DEPC).</text>
</comment>
<comment type="biophysicochemical properties">
    <kinetics>
        <KM evidence="3">1.14 mM for pNP-butyrate</KM>
        <text evidence="3">kcat is 0.0932 sec(-1) with pNP-butyrate as substrate.</text>
    </kinetics>
    <phDependence>
        <text evidence="3">Optimum pH is 7.0 (with pNP-butyrate as substrate).</text>
    </phDependence>
    <temperatureDependence>
        <text evidence="3">Optimum temperature is 40 degrees Celsius (with pNP-butyrate as substrate).</text>
    </temperatureDependence>
</comment>
<comment type="subcellular location">
    <subcellularLocation>
        <location evidence="2">Secreted</location>
        <location evidence="2">Cell wall</location>
    </subcellularLocation>
    <subcellularLocation>
        <location evidence="2">Cell membrane</location>
    </subcellularLocation>
</comment>
<comment type="induction">
    <text evidence="3">Up-regulated in acidic and oxidative stress conditions.</text>
</comment>
<comment type="similarity">
    <text evidence="5">Belongs to the beta-lactamase family.</text>
</comment>